<accession>Q81BT4</accession>
<keyword id="KW-0963">Cytoplasm</keyword>
<keyword id="KW-0479">Metal-binding</keyword>
<keyword id="KW-0520">NAD</keyword>
<keyword id="KW-1185">Reference proteome</keyword>
<keyword id="KW-0808">Transferase</keyword>
<keyword id="KW-0862">Zinc</keyword>
<gene>
    <name evidence="1" type="primary">cobB</name>
    <name type="ordered locus">BC_3062</name>
</gene>
<dbReference type="EC" id="2.3.1.286" evidence="1 2"/>
<dbReference type="EMBL" id="AE016877">
    <property type="protein sequence ID" value="AAP10009.1"/>
    <property type="molecule type" value="Genomic_DNA"/>
</dbReference>
<dbReference type="RefSeq" id="NP_832808.1">
    <property type="nucleotide sequence ID" value="NC_004722.1"/>
</dbReference>
<dbReference type="SMR" id="Q81BT4"/>
<dbReference type="STRING" id="226900.BC_3062"/>
<dbReference type="KEGG" id="bce:BC3062"/>
<dbReference type="PATRIC" id="fig|226900.8.peg.3137"/>
<dbReference type="HOGENOM" id="CLU_023643_3_0_9"/>
<dbReference type="Proteomes" id="UP000001417">
    <property type="component" value="Chromosome"/>
</dbReference>
<dbReference type="GO" id="GO:0005737">
    <property type="term" value="C:cytoplasm"/>
    <property type="evidence" value="ECO:0007669"/>
    <property type="project" value="UniProtKB-SubCell"/>
</dbReference>
<dbReference type="GO" id="GO:0017136">
    <property type="term" value="F:histone deacetylase activity, NAD-dependent"/>
    <property type="evidence" value="ECO:0000318"/>
    <property type="project" value="GO_Central"/>
</dbReference>
<dbReference type="GO" id="GO:0070403">
    <property type="term" value="F:NAD+ binding"/>
    <property type="evidence" value="ECO:0000318"/>
    <property type="project" value="GO_Central"/>
</dbReference>
<dbReference type="GO" id="GO:0008270">
    <property type="term" value="F:zinc ion binding"/>
    <property type="evidence" value="ECO:0007669"/>
    <property type="project" value="UniProtKB-UniRule"/>
</dbReference>
<dbReference type="CDD" id="cd01413">
    <property type="entry name" value="SIR2_Af2"/>
    <property type="match status" value="1"/>
</dbReference>
<dbReference type="Gene3D" id="3.30.1600.10">
    <property type="entry name" value="SIR2/SIRT2 'Small Domain"/>
    <property type="match status" value="1"/>
</dbReference>
<dbReference type="Gene3D" id="3.40.50.1220">
    <property type="entry name" value="TPP-binding domain"/>
    <property type="match status" value="1"/>
</dbReference>
<dbReference type="HAMAP" id="MF_01968">
    <property type="entry name" value="Sirtuin_ClassU"/>
    <property type="match status" value="1"/>
</dbReference>
<dbReference type="InterPro" id="IPR029035">
    <property type="entry name" value="DHS-like_NAD/FAD-binding_dom"/>
</dbReference>
<dbReference type="InterPro" id="IPR050134">
    <property type="entry name" value="NAD-dep_sirtuin_deacylases"/>
</dbReference>
<dbReference type="InterPro" id="IPR003000">
    <property type="entry name" value="Sirtuin"/>
</dbReference>
<dbReference type="InterPro" id="IPR026591">
    <property type="entry name" value="Sirtuin_cat_small_dom_sf"/>
</dbReference>
<dbReference type="InterPro" id="IPR028628">
    <property type="entry name" value="Sirtuin_class_U"/>
</dbReference>
<dbReference type="InterPro" id="IPR026590">
    <property type="entry name" value="Ssirtuin_cat_dom"/>
</dbReference>
<dbReference type="NCBIfam" id="NF001752">
    <property type="entry name" value="PRK00481.1-1"/>
    <property type="match status" value="1"/>
</dbReference>
<dbReference type="NCBIfam" id="NF001754">
    <property type="entry name" value="PRK00481.1-4"/>
    <property type="match status" value="1"/>
</dbReference>
<dbReference type="PANTHER" id="PTHR11085:SF4">
    <property type="entry name" value="NAD-DEPENDENT PROTEIN DEACYLASE"/>
    <property type="match status" value="1"/>
</dbReference>
<dbReference type="PANTHER" id="PTHR11085">
    <property type="entry name" value="NAD-DEPENDENT PROTEIN DEACYLASE SIRTUIN-5, MITOCHONDRIAL-RELATED"/>
    <property type="match status" value="1"/>
</dbReference>
<dbReference type="Pfam" id="PF02146">
    <property type="entry name" value="SIR2"/>
    <property type="match status" value="1"/>
</dbReference>
<dbReference type="SUPFAM" id="SSF52467">
    <property type="entry name" value="DHS-like NAD/FAD-binding domain"/>
    <property type="match status" value="1"/>
</dbReference>
<dbReference type="PROSITE" id="PS50305">
    <property type="entry name" value="SIRTUIN"/>
    <property type="match status" value="1"/>
</dbReference>
<evidence type="ECO:0000255" key="1">
    <source>
        <dbReference type="HAMAP-Rule" id="MF_01968"/>
    </source>
</evidence>
<evidence type="ECO:0000255" key="2">
    <source>
        <dbReference type="PROSITE-ProRule" id="PRU00236"/>
    </source>
</evidence>
<name>NPD_BACCR</name>
<comment type="function">
    <text evidence="1">NAD-dependent protein deacetylase which modulates the activities of several enzymes which are inactive in their acetylated form.</text>
</comment>
<comment type="catalytic activity">
    <reaction evidence="1">
        <text>N(6)-acetyl-L-lysyl-[protein] + NAD(+) + H2O = 2''-O-acetyl-ADP-D-ribose + nicotinamide + L-lysyl-[protein]</text>
        <dbReference type="Rhea" id="RHEA:43636"/>
        <dbReference type="Rhea" id="RHEA-COMP:9752"/>
        <dbReference type="Rhea" id="RHEA-COMP:10731"/>
        <dbReference type="ChEBI" id="CHEBI:15377"/>
        <dbReference type="ChEBI" id="CHEBI:17154"/>
        <dbReference type="ChEBI" id="CHEBI:29969"/>
        <dbReference type="ChEBI" id="CHEBI:57540"/>
        <dbReference type="ChEBI" id="CHEBI:61930"/>
        <dbReference type="ChEBI" id="CHEBI:83767"/>
        <dbReference type="EC" id="2.3.1.286"/>
    </reaction>
</comment>
<comment type="cofactor">
    <cofactor evidence="1">
        <name>Zn(2+)</name>
        <dbReference type="ChEBI" id="CHEBI:29105"/>
    </cofactor>
    <text evidence="1">Binds 1 zinc ion per subunit.</text>
</comment>
<comment type="subcellular location">
    <subcellularLocation>
        <location evidence="1">Cytoplasm</location>
    </subcellularLocation>
</comment>
<comment type="similarity">
    <text evidence="1">Belongs to the sirtuin family. Class U subfamily.</text>
</comment>
<reference key="1">
    <citation type="journal article" date="2003" name="Nature">
        <title>Genome sequence of Bacillus cereus and comparative analysis with Bacillus anthracis.</title>
        <authorList>
            <person name="Ivanova N."/>
            <person name="Sorokin A."/>
            <person name="Anderson I."/>
            <person name="Galleron N."/>
            <person name="Candelon B."/>
            <person name="Kapatral V."/>
            <person name="Bhattacharyya A."/>
            <person name="Reznik G."/>
            <person name="Mikhailova N."/>
            <person name="Lapidus A."/>
            <person name="Chu L."/>
            <person name="Mazur M."/>
            <person name="Goltsman E."/>
            <person name="Larsen N."/>
            <person name="D'Souza M."/>
            <person name="Walunas T."/>
            <person name="Grechkin Y."/>
            <person name="Pusch G."/>
            <person name="Haselkorn R."/>
            <person name="Fonstein M."/>
            <person name="Ehrlich S.D."/>
            <person name="Overbeek R."/>
            <person name="Kyrpides N.C."/>
        </authorList>
    </citation>
    <scope>NUCLEOTIDE SEQUENCE [LARGE SCALE GENOMIC DNA]</scope>
    <source>
        <strain>ATCC 14579 / DSM 31 / CCUG 7414 / JCM 2152 / NBRC 15305 / NCIMB 9373 / NCTC 2599 / NRRL B-3711</strain>
    </source>
</reference>
<sequence length="245" mass="27937">MIFVQQFEEVRSILEKAKKITVLTGAGASTESGIPDFRSANGLYADANVEMYLSRGYYNRSPKEFWKHYKEIFQINTFHQYKPNRGHRFLAELEEQGKDITILTQNIDGLHQLGGSKHVIDLHGTLQTAHCPKCKSGYDLQYMIDHEVPRCEKCNFILNPDVVLYGDTLPQYQNAIKRLYETDVLIVMGTSLKVQPVASFPQIAKREVGATTILVNEELTGQEYNFDFVFQNKIGEFVEGLSSMK</sequence>
<protein>
    <recommendedName>
        <fullName evidence="1">NAD-dependent protein deacetylase</fullName>
        <ecNumber evidence="1 2">2.3.1.286</ecNumber>
    </recommendedName>
    <alternativeName>
        <fullName evidence="1">Regulatory protein SIR2 homolog</fullName>
    </alternativeName>
</protein>
<proteinExistence type="inferred from homology"/>
<organism>
    <name type="scientific">Bacillus cereus (strain ATCC 14579 / DSM 31 / CCUG 7414 / JCM 2152 / NBRC 15305 / NCIMB 9373 / NCTC 2599 / NRRL B-3711)</name>
    <dbReference type="NCBI Taxonomy" id="226900"/>
    <lineage>
        <taxon>Bacteria</taxon>
        <taxon>Bacillati</taxon>
        <taxon>Bacillota</taxon>
        <taxon>Bacilli</taxon>
        <taxon>Bacillales</taxon>
        <taxon>Bacillaceae</taxon>
        <taxon>Bacillus</taxon>
        <taxon>Bacillus cereus group</taxon>
    </lineage>
</organism>
<feature type="chain" id="PRO_0000110289" description="NAD-dependent protein deacetylase">
    <location>
        <begin position="1"/>
        <end position="245"/>
    </location>
</feature>
<feature type="domain" description="Deacetylase sirtuin-type" evidence="2">
    <location>
        <begin position="1"/>
        <end position="245"/>
    </location>
</feature>
<feature type="active site" description="Proton acceptor" evidence="2">
    <location>
        <position position="123"/>
    </location>
</feature>
<feature type="binding site" evidence="1">
    <location>
        <position position="26"/>
    </location>
    <ligand>
        <name>NAD(+)</name>
        <dbReference type="ChEBI" id="CHEBI:57540"/>
    </ligand>
</feature>
<feature type="binding site" evidence="1">
    <location>
        <position position="30"/>
    </location>
    <ligand>
        <name>NAD(+)</name>
        <dbReference type="ChEBI" id="CHEBI:57540"/>
    </ligand>
</feature>
<feature type="binding site" evidence="1">
    <location>
        <position position="37"/>
    </location>
    <ligand>
        <name>NAD(+)</name>
        <dbReference type="ChEBI" id="CHEBI:57540"/>
    </ligand>
</feature>
<feature type="binding site" evidence="1">
    <location>
        <position position="37"/>
    </location>
    <ligand>
        <name>nicotinamide</name>
        <dbReference type="ChEBI" id="CHEBI:17154"/>
    </ligand>
</feature>
<feature type="binding site" evidence="1">
    <location>
        <position position="38"/>
    </location>
    <ligand>
        <name>NAD(+)</name>
        <dbReference type="ChEBI" id="CHEBI:57540"/>
    </ligand>
</feature>
<feature type="binding site" evidence="1">
    <location>
        <position position="105"/>
    </location>
    <ligand>
        <name>NAD(+)</name>
        <dbReference type="ChEBI" id="CHEBI:57540"/>
    </ligand>
</feature>
<feature type="binding site" evidence="1">
    <location>
        <position position="107"/>
    </location>
    <ligand>
        <name>NAD(+)</name>
        <dbReference type="ChEBI" id="CHEBI:57540"/>
    </ligand>
</feature>
<feature type="binding site" evidence="1">
    <location>
        <position position="107"/>
    </location>
    <ligand>
        <name>nicotinamide</name>
        <dbReference type="ChEBI" id="CHEBI:17154"/>
    </ligand>
</feature>
<feature type="binding site" evidence="1">
    <location>
        <position position="108"/>
    </location>
    <ligand>
        <name>NAD(+)</name>
        <dbReference type="ChEBI" id="CHEBI:57540"/>
    </ligand>
</feature>
<feature type="binding site" evidence="1">
    <location>
        <position position="108"/>
    </location>
    <ligand>
        <name>nicotinamide</name>
        <dbReference type="ChEBI" id="CHEBI:17154"/>
    </ligand>
</feature>
<feature type="binding site" evidence="1">
    <location>
        <position position="123"/>
    </location>
    <ligand>
        <name>NAD(+)</name>
        <dbReference type="ChEBI" id="CHEBI:57540"/>
    </ligand>
</feature>
<feature type="binding site" evidence="1">
    <location>
        <position position="131"/>
    </location>
    <ligand>
        <name>Zn(2+)</name>
        <dbReference type="ChEBI" id="CHEBI:29105"/>
    </ligand>
</feature>
<feature type="binding site" evidence="1">
    <location>
        <position position="134"/>
    </location>
    <ligand>
        <name>Zn(2+)</name>
        <dbReference type="ChEBI" id="CHEBI:29105"/>
    </ligand>
</feature>
<feature type="binding site" evidence="1">
    <location>
        <position position="151"/>
    </location>
    <ligand>
        <name>Zn(2+)</name>
        <dbReference type="ChEBI" id="CHEBI:29105"/>
    </ligand>
</feature>
<feature type="binding site" evidence="1">
    <location>
        <position position="154"/>
    </location>
    <ligand>
        <name>Zn(2+)</name>
        <dbReference type="ChEBI" id="CHEBI:29105"/>
    </ligand>
</feature>
<feature type="binding site" evidence="1">
    <location>
        <position position="190"/>
    </location>
    <ligand>
        <name>NAD(+)</name>
        <dbReference type="ChEBI" id="CHEBI:57540"/>
    </ligand>
</feature>
<feature type="binding site" evidence="1">
    <location>
        <position position="191"/>
    </location>
    <ligand>
        <name>NAD(+)</name>
        <dbReference type="ChEBI" id="CHEBI:57540"/>
    </ligand>
</feature>
<feature type="binding site" evidence="1">
    <location>
        <position position="216"/>
    </location>
    <ligand>
        <name>NAD(+)</name>
        <dbReference type="ChEBI" id="CHEBI:57540"/>
    </ligand>
</feature>
<feature type="binding site" evidence="1">
    <location>
        <position position="234"/>
    </location>
    <ligand>
        <name>NAD(+)</name>
        <dbReference type="ChEBI" id="CHEBI:57540"/>
    </ligand>
</feature>